<reference key="1">
    <citation type="journal article" date="1982" name="Biochim. Biophys. Acta">
        <title>C-reactive protein and serum amyloid P component in the plaice (Pleuronectes platessa L.), a marine teleost, are homologous with their human counterparts.</title>
        <authorList>
            <person name="Pepys M.B."/>
            <person name="de Beer F.C."/>
            <person name="Milstein C.P."/>
            <person name="March J.F."/>
            <person name="Feinstein A."/>
            <person name="Butress N."/>
            <person name="Clamp J.R."/>
            <person name="Taylor J."/>
            <person name="Bruton C."/>
            <person name="Fletcher T.C."/>
        </authorList>
    </citation>
    <scope>PROTEIN SEQUENCE</scope>
</reference>
<accession>P20677</accession>
<evidence type="ECO:0000305" key="1"/>
<organism>
    <name type="scientific">Pleuronectes platessa</name>
    <name type="common">European plaice</name>
    <dbReference type="NCBI Taxonomy" id="8262"/>
    <lineage>
        <taxon>Eukaryota</taxon>
        <taxon>Metazoa</taxon>
        <taxon>Chordata</taxon>
        <taxon>Craniata</taxon>
        <taxon>Vertebrata</taxon>
        <taxon>Euteleostomi</taxon>
        <taxon>Actinopterygii</taxon>
        <taxon>Neopterygii</taxon>
        <taxon>Teleostei</taxon>
        <taxon>Neoteleostei</taxon>
        <taxon>Acanthomorphata</taxon>
        <taxon>Carangaria</taxon>
        <taxon>Pleuronectiformes</taxon>
        <taxon>Pleuronectoidei</taxon>
        <taxon>Pleuronectidae</taxon>
        <taxon>Pleuronectes</taxon>
    </lineage>
</organism>
<sequence>ZPIDLMGKVFVFDKELSPBI</sequence>
<comment type="subunit">
    <text>Homopentamer. Pentraxin (or pentaxin) have a discoid arrangement of 5 non-covalently bound subunits.</text>
</comment>
<comment type="subcellular location">
    <subcellularLocation>
        <location>Secreted</location>
    </subcellularLocation>
</comment>
<comment type="similarity">
    <text evidence="1">Belongs to the pentraxin family.</text>
</comment>
<proteinExistence type="evidence at protein level"/>
<dbReference type="PIR" id="A05332">
    <property type="entry name" value="A05332"/>
</dbReference>
<dbReference type="GO" id="GO:0005576">
    <property type="term" value="C:extracellular region"/>
    <property type="evidence" value="ECO:0007669"/>
    <property type="project" value="UniProtKB-SubCell"/>
</dbReference>
<dbReference type="GO" id="GO:0030246">
    <property type="term" value="F:carbohydrate binding"/>
    <property type="evidence" value="ECO:0007669"/>
    <property type="project" value="UniProtKB-KW"/>
</dbReference>
<keyword id="KW-0034">Amyloid</keyword>
<keyword id="KW-0903">Direct protein sequencing</keyword>
<keyword id="KW-0430">Lectin</keyword>
<keyword id="KW-0964">Secreted</keyword>
<feature type="chain" id="PRO_0000162505" description="Serum amyloid P-component">
    <location>
        <begin position="1"/>
        <end position="20" status="greater than"/>
    </location>
</feature>
<feature type="domain" description="Pentraxin (PTX)">
    <location>
        <begin position="1"/>
        <end position="20" status="greater than"/>
    </location>
</feature>
<feature type="non-terminal residue">
    <location>
        <position position="20"/>
    </location>
</feature>
<name>SAMP_PLEPL</name>
<protein>
    <recommendedName>
        <fullName>Serum amyloid P-component</fullName>
        <shortName>SAP</shortName>
    </recommendedName>
</protein>